<dbReference type="EMBL" id="U09969">
    <property type="protein sequence ID" value="AAA68989.1"/>
    <property type="molecule type" value="mRNA"/>
</dbReference>
<dbReference type="EMBL" id="AY497579">
    <property type="protein sequence ID" value="AAR89520.1"/>
    <property type="molecule type" value="Genomic_DNA"/>
</dbReference>
<dbReference type="EMBL" id="AY586272">
    <property type="protein sequence ID" value="AAS97956.1"/>
    <property type="molecule type" value="Genomic_DNA"/>
</dbReference>
<dbReference type="PDB" id="3FRP">
    <property type="method" value="X-ray"/>
    <property type="resolution" value="2.61 A"/>
    <property type="chains" value="A=23-649, B=1264-1642, G=733-984"/>
</dbReference>
<dbReference type="PDB" id="3HRZ">
    <property type="method" value="X-ray"/>
    <property type="resolution" value="2.20 A"/>
    <property type="chains" value="A=23-649, B=733-984, C=1264-1642"/>
</dbReference>
<dbReference type="PDB" id="3HS0">
    <property type="method" value="X-ray"/>
    <property type="resolution" value="3.00 A"/>
    <property type="chains" value="A/F=23-649, B/G=733-984, C/H=1264-1642"/>
</dbReference>
<dbReference type="PDB" id="3PRX">
    <property type="method" value="X-ray"/>
    <property type="resolution" value="4.30 A"/>
    <property type="chains" value="B/D=1-1642"/>
</dbReference>
<dbReference type="PDB" id="3PVM">
    <property type="method" value="X-ray"/>
    <property type="resolution" value="4.30 A"/>
    <property type="chains" value="B/D=1-1642"/>
</dbReference>
<dbReference type="PDB" id="8AYH">
    <property type="method" value="EM"/>
    <property type="resolution" value="3.35 A"/>
    <property type="chains" value="B=1-1642"/>
</dbReference>
<dbReference type="PDBsum" id="3FRP"/>
<dbReference type="PDBsum" id="3HRZ"/>
<dbReference type="PDBsum" id="3HS0"/>
<dbReference type="PDBsum" id="3PRX"/>
<dbReference type="PDBsum" id="3PVM"/>
<dbReference type="PDBsum" id="8AYH"/>
<dbReference type="EMDB" id="EMD-15713"/>
<dbReference type="SASBDB" id="Q91132"/>
<dbReference type="SMR" id="Q91132"/>
<dbReference type="IntAct" id="Q91132">
    <property type="interactions" value="3"/>
</dbReference>
<dbReference type="MINT" id="Q91132"/>
<dbReference type="BindingDB" id="Q91132"/>
<dbReference type="MEROPS" id="I39.950"/>
<dbReference type="GlyConnect" id="105">
    <property type="glycosylation" value="23 N-Linked glycans"/>
</dbReference>
<dbReference type="iPTMnet" id="Q91132"/>
<dbReference type="TopDownProteomics" id="Q91132"/>
<dbReference type="EvolutionaryTrace" id="Q91132"/>
<dbReference type="GO" id="GO:0005615">
    <property type="term" value="C:extracellular space"/>
    <property type="evidence" value="ECO:0007669"/>
    <property type="project" value="InterPro"/>
</dbReference>
<dbReference type="GO" id="GO:0004866">
    <property type="term" value="F:endopeptidase inhibitor activity"/>
    <property type="evidence" value="ECO:0007669"/>
    <property type="project" value="InterPro"/>
</dbReference>
<dbReference type="GO" id="GO:0046872">
    <property type="term" value="F:metal ion binding"/>
    <property type="evidence" value="ECO:0007669"/>
    <property type="project" value="UniProtKB-KW"/>
</dbReference>
<dbReference type="GO" id="GO:0090729">
    <property type="term" value="F:toxin activity"/>
    <property type="evidence" value="ECO:0007669"/>
    <property type="project" value="UniProtKB-KW"/>
</dbReference>
<dbReference type="GO" id="GO:0006956">
    <property type="term" value="P:complement activation"/>
    <property type="evidence" value="ECO:0007669"/>
    <property type="project" value="InterPro"/>
</dbReference>
<dbReference type="GO" id="GO:0006954">
    <property type="term" value="P:inflammatory response"/>
    <property type="evidence" value="ECO:0007669"/>
    <property type="project" value="UniProtKB-KW"/>
</dbReference>
<dbReference type="CDD" id="cd00017">
    <property type="entry name" value="ANATO"/>
    <property type="match status" value="1"/>
</dbReference>
<dbReference type="CDD" id="cd02896">
    <property type="entry name" value="complement_C3_C4_C5"/>
    <property type="match status" value="1"/>
</dbReference>
<dbReference type="CDD" id="cd03583">
    <property type="entry name" value="NTR_complement_C3"/>
    <property type="match status" value="1"/>
</dbReference>
<dbReference type="FunFam" id="2.20.130.20:FF:000001">
    <property type="entry name" value="Complement C3"/>
    <property type="match status" value="1"/>
</dbReference>
<dbReference type="FunFam" id="2.40.50.120:FF:000013">
    <property type="entry name" value="Complement C3"/>
    <property type="match status" value="1"/>
</dbReference>
<dbReference type="FunFam" id="2.60.40.10:FF:001013">
    <property type="entry name" value="Complement C3"/>
    <property type="match status" value="1"/>
</dbReference>
<dbReference type="FunFam" id="2.60.40.1930:FF:000008">
    <property type="entry name" value="Complement C3"/>
    <property type="match status" value="1"/>
</dbReference>
<dbReference type="FunFam" id="2.60.40.10:FF:000155">
    <property type="entry name" value="complement C3 isoform X1"/>
    <property type="match status" value="1"/>
</dbReference>
<dbReference type="FunFam" id="2.60.40.1940:FF:000001">
    <property type="entry name" value="Complement component C3"/>
    <property type="match status" value="1"/>
</dbReference>
<dbReference type="Gene3D" id="1.50.10.20">
    <property type="match status" value="1"/>
</dbReference>
<dbReference type="Gene3D" id="2.20.130.20">
    <property type="match status" value="1"/>
</dbReference>
<dbReference type="Gene3D" id="2.40.50.120">
    <property type="match status" value="1"/>
</dbReference>
<dbReference type="Gene3D" id="2.60.120.1540">
    <property type="match status" value="1"/>
</dbReference>
<dbReference type="Gene3D" id="2.60.40.1930">
    <property type="match status" value="3"/>
</dbReference>
<dbReference type="Gene3D" id="2.60.40.1940">
    <property type="match status" value="1"/>
</dbReference>
<dbReference type="Gene3D" id="6.20.50.160">
    <property type="match status" value="1"/>
</dbReference>
<dbReference type="Gene3D" id="2.60.40.690">
    <property type="entry name" value="Alpha-macroglobulin, receptor-binding domain"/>
    <property type="match status" value="1"/>
</dbReference>
<dbReference type="Gene3D" id="1.20.91.20">
    <property type="entry name" value="Anaphylotoxins (complement system)"/>
    <property type="match status" value="1"/>
</dbReference>
<dbReference type="Gene3D" id="2.60.40.10">
    <property type="entry name" value="Immunoglobulins"/>
    <property type="match status" value="2"/>
</dbReference>
<dbReference type="InterPro" id="IPR009048">
    <property type="entry name" value="A-macroglobulin_rcpt-bd"/>
</dbReference>
<dbReference type="InterPro" id="IPR036595">
    <property type="entry name" value="A-macroglobulin_rcpt-bd_sf"/>
</dbReference>
<dbReference type="InterPro" id="IPR050473">
    <property type="entry name" value="A2M/Complement_sys"/>
</dbReference>
<dbReference type="InterPro" id="IPR011625">
    <property type="entry name" value="A2M_N_BRD"/>
</dbReference>
<dbReference type="InterPro" id="IPR047565">
    <property type="entry name" value="Alpha-macroglob_thiol-ester_cl"/>
</dbReference>
<dbReference type="InterPro" id="IPR011626">
    <property type="entry name" value="Alpha-macroglobulin_TED"/>
</dbReference>
<dbReference type="InterPro" id="IPR000020">
    <property type="entry name" value="Anaphylatoxin/fibulin"/>
</dbReference>
<dbReference type="InterPro" id="IPR018081">
    <property type="entry name" value="Anaphylatoxin_comp_syst"/>
</dbReference>
<dbReference type="InterPro" id="IPR001840">
    <property type="entry name" value="Anaphylatoxn_comp_syst_dom"/>
</dbReference>
<dbReference type="InterPro" id="IPR041425">
    <property type="entry name" value="C3/4/5_MG1"/>
</dbReference>
<dbReference type="InterPro" id="IPR049466">
    <property type="entry name" value="C3_CUB1"/>
</dbReference>
<dbReference type="InterPro" id="IPR048848">
    <property type="entry name" value="C3_CUB2"/>
</dbReference>
<dbReference type="InterPro" id="IPR013783">
    <property type="entry name" value="Ig-like_fold"/>
</dbReference>
<dbReference type="InterPro" id="IPR001599">
    <property type="entry name" value="Macroglobln_a2"/>
</dbReference>
<dbReference type="InterPro" id="IPR019742">
    <property type="entry name" value="MacrogloblnA2_CS"/>
</dbReference>
<dbReference type="InterPro" id="IPR002890">
    <property type="entry name" value="MG2"/>
</dbReference>
<dbReference type="InterPro" id="IPR041555">
    <property type="entry name" value="MG3"/>
</dbReference>
<dbReference type="InterPro" id="IPR040839">
    <property type="entry name" value="MG4"/>
</dbReference>
<dbReference type="InterPro" id="IPR001134">
    <property type="entry name" value="Netrin_domain"/>
</dbReference>
<dbReference type="InterPro" id="IPR018933">
    <property type="entry name" value="Netrin_module_non-TIMP"/>
</dbReference>
<dbReference type="InterPro" id="IPR035815">
    <property type="entry name" value="NTR_complement_C3"/>
</dbReference>
<dbReference type="InterPro" id="IPR008930">
    <property type="entry name" value="Terpenoid_cyclase/PrenylTrfase"/>
</dbReference>
<dbReference type="InterPro" id="IPR008993">
    <property type="entry name" value="TIMP-like_OB-fold"/>
</dbReference>
<dbReference type="PANTHER" id="PTHR11412:SF81">
    <property type="entry name" value="COMPLEMENT C3"/>
    <property type="match status" value="1"/>
</dbReference>
<dbReference type="PANTHER" id="PTHR11412">
    <property type="entry name" value="MACROGLOBULIN / COMPLEMENT"/>
    <property type="match status" value="1"/>
</dbReference>
<dbReference type="Pfam" id="PF00207">
    <property type="entry name" value="A2M"/>
    <property type="match status" value="1"/>
</dbReference>
<dbReference type="Pfam" id="PF07703">
    <property type="entry name" value="A2M_BRD"/>
    <property type="match status" value="1"/>
</dbReference>
<dbReference type="Pfam" id="PF07677">
    <property type="entry name" value="A2M_recep"/>
    <property type="match status" value="1"/>
</dbReference>
<dbReference type="Pfam" id="PF01821">
    <property type="entry name" value="ANATO"/>
    <property type="match status" value="1"/>
</dbReference>
<dbReference type="Pfam" id="PF21406">
    <property type="entry name" value="C3_CUB1"/>
    <property type="match status" value="1"/>
</dbReference>
<dbReference type="Pfam" id="PF21308">
    <property type="entry name" value="C3_CUB2"/>
    <property type="match status" value="1"/>
</dbReference>
<dbReference type="Pfam" id="PF17790">
    <property type="entry name" value="MG1"/>
    <property type="match status" value="1"/>
</dbReference>
<dbReference type="Pfam" id="PF01835">
    <property type="entry name" value="MG2"/>
    <property type="match status" value="1"/>
</dbReference>
<dbReference type="Pfam" id="PF17791">
    <property type="entry name" value="MG3"/>
    <property type="match status" value="1"/>
</dbReference>
<dbReference type="Pfam" id="PF17789">
    <property type="entry name" value="MG4"/>
    <property type="match status" value="1"/>
</dbReference>
<dbReference type="Pfam" id="PF01759">
    <property type="entry name" value="NTR"/>
    <property type="match status" value="1"/>
</dbReference>
<dbReference type="Pfam" id="PF07678">
    <property type="entry name" value="TED_complement"/>
    <property type="match status" value="1"/>
</dbReference>
<dbReference type="PRINTS" id="PR00004">
    <property type="entry name" value="ANAPHYLATOXN"/>
</dbReference>
<dbReference type="SMART" id="SM01360">
    <property type="entry name" value="A2M"/>
    <property type="match status" value="1"/>
</dbReference>
<dbReference type="SMART" id="SM01359">
    <property type="entry name" value="A2M_N_2"/>
    <property type="match status" value="1"/>
</dbReference>
<dbReference type="SMART" id="SM01361">
    <property type="entry name" value="A2M_recep"/>
    <property type="match status" value="1"/>
</dbReference>
<dbReference type="SMART" id="SM00104">
    <property type="entry name" value="ANATO"/>
    <property type="match status" value="1"/>
</dbReference>
<dbReference type="SMART" id="SM00643">
    <property type="entry name" value="C345C"/>
    <property type="match status" value="1"/>
</dbReference>
<dbReference type="SMART" id="SM01419">
    <property type="entry name" value="Thiol-ester_cl"/>
    <property type="match status" value="1"/>
</dbReference>
<dbReference type="SUPFAM" id="SSF49410">
    <property type="entry name" value="Alpha-macroglobulin receptor domain"/>
    <property type="match status" value="1"/>
</dbReference>
<dbReference type="SUPFAM" id="SSF47686">
    <property type="entry name" value="Anaphylotoxins (complement system)"/>
    <property type="match status" value="1"/>
</dbReference>
<dbReference type="SUPFAM" id="SSF48239">
    <property type="entry name" value="Terpenoid cyclases/Protein prenyltransferases"/>
    <property type="match status" value="1"/>
</dbReference>
<dbReference type="SUPFAM" id="SSF50242">
    <property type="entry name" value="TIMP-like"/>
    <property type="match status" value="1"/>
</dbReference>
<dbReference type="PROSITE" id="PS00477">
    <property type="entry name" value="ALPHA_2_MACROGLOBULIN"/>
    <property type="match status" value="1"/>
</dbReference>
<dbReference type="PROSITE" id="PS01178">
    <property type="entry name" value="ANAPHYLATOXIN_2"/>
    <property type="match status" value="1"/>
</dbReference>
<dbReference type="PROSITE" id="PS50189">
    <property type="entry name" value="NTR"/>
    <property type="match status" value="1"/>
</dbReference>
<organism>
    <name type="scientific">Naja kaouthia</name>
    <name type="common">Monocled cobra</name>
    <name type="synonym">Naja siamensis</name>
    <dbReference type="NCBI Taxonomy" id="8649"/>
    <lineage>
        <taxon>Eukaryota</taxon>
        <taxon>Metazoa</taxon>
        <taxon>Chordata</taxon>
        <taxon>Craniata</taxon>
        <taxon>Vertebrata</taxon>
        <taxon>Euteleostomi</taxon>
        <taxon>Lepidosauria</taxon>
        <taxon>Squamata</taxon>
        <taxon>Bifurcata</taxon>
        <taxon>Unidentata</taxon>
        <taxon>Episquamata</taxon>
        <taxon>Toxicofera</taxon>
        <taxon>Serpentes</taxon>
        <taxon>Colubroidea</taxon>
        <taxon>Elapidae</taxon>
        <taxon>Elapinae</taxon>
        <taxon>Naja</taxon>
    </lineage>
</organism>
<name>VCO3_NAJKA</name>
<accession>Q91132</accession>
<accession>Q6PQH3</accession>
<accession>Q6RHR7</accession>
<proteinExistence type="evidence at protein level"/>
<feature type="signal peptide" evidence="1">
    <location>
        <begin position="1"/>
        <end position="22"/>
    </location>
</feature>
<feature type="chain" id="PRO_0000005928" description="Cobra venom factor">
    <location>
        <begin position="23"/>
        <end position="1642"/>
    </location>
</feature>
<feature type="chain" id="PRO_0000005929" description="Cobra venom factor alpha chain">
    <location>
        <begin position="23"/>
        <end position="649"/>
    </location>
</feature>
<feature type="propeptide" id="PRO_0000423372">
    <location>
        <begin position="650"/>
        <end position="732"/>
    </location>
</feature>
<feature type="chain" id="PRO_0000005930" description="Cobra venom factor gamma chain">
    <location>
        <begin position="733"/>
        <end position="984"/>
    </location>
</feature>
<feature type="propeptide" id="PRO_0000423373">
    <location>
        <begin position="985"/>
        <end position="1263"/>
    </location>
</feature>
<feature type="chain" id="PRO_0000005931" description="Cobra venom factor beta chain">
    <location>
        <begin position="1264"/>
        <end position="1642"/>
    </location>
</feature>
<feature type="domain" description="Anaphylatoxin-like" evidence="3">
    <location>
        <begin position="677"/>
        <end position="712"/>
    </location>
</feature>
<feature type="domain" description="NTR" evidence="4">
    <location>
        <begin position="1497"/>
        <end position="1640"/>
    </location>
</feature>
<feature type="region of interest" description="C3a-like domain" evidence="1">
    <location>
        <begin position="654"/>
        <end position="732"/>
    </location>
</feature>
<feature type="region of interest" description="Factor B binding site" evidence="1">
    <location>
        <begin position="736"/>
        <end position="747"/>
    </location>
</feature>
<feature type="region of interest" description="C3d-like domain" evidence="1">
    <location>
        <begin position="985"/>
        <end position="1263"/>
    </location>
</feature>
<feature type="region of interest" description="Factor H binding site" evidence="1">
    <location>
        <begin position="1190"/>
        <end position="1253"/>
    </location>
</feature>
<feature type="binding site">
    <location>
        <position position="516"/>
    </location>
    <ligand>
        <name>Mg(2+)</name>
        <dbReference type="ChEBI" id="CHEBI:18420"/>
    </ligand>
</feature>
<feature type="binding site">
    <location>
        <position position="539"/>
    </location>
    <ligand>
        <name>Mg(2+)</name>
        <dbReference type="ChEBI" id="CHEBI:18420"/>
    </ligand>
</feature>
<feature type="binding site">
    <location>
        <position position="540"/>
    </location>
    <ligand>
        <name>Mg(2+)</name>
        <dbReference type="ChEBI" id="CHEBI:18420"/>
    </ligand>
</feature>
<feature type="binding site">
    <location>
        <position position="542"/>
    </location>
    <ligand>
        <name>Mg(2+)</name>
        <dbReference type="ChEBI" id="CHEBI:18420"/>
    </ligand>
</feature>
<feature type="glycosylation site" description="N-linked (GlcNAc...) asparagine" evidence="2">
    <location>
        <position position="153"/>
    </location>
</feature>
<feature type="glycosylation site" description="N-linked (GlcNAc...) asparagine" evidence="2">
    <location>
        <position position="158"/>
    </location>
</feature>
<feature type="glycosylation site" description="N-linked (GlcNAc...) asparagine" evidence="7 8">
    <location>
        <position position="209"/>
    </location>
</feature>
<feature type="glycosylation site" description="N-linked (GlcNAc...) asparagine" evidence="7 8">
    <location>
        <position position="1346"/>
    </location>
</feature>
<feature type="disulfide bond" description="Interchain (between alpha and gamma chains)">
    <location>
        <begin position="544"/>
        <end position="801"/>
    </location>
</feature>
<feature type="disulfide bond">
    <location>
        <begin position="609"/>
        <end position="644"/>
    </location>
</feature>
<feature type="disulfide bond" evidence="1">
    <location>
        <begin position="677"/>
        <end position="704"/>
    </location>
</feature>
<feature type="disulfide bond" evidence="1">
    <location>
        <begin position="678"/>
        <end position="711"/>
    </location>
</feature>
<feature type="disulfide bond" evidence="1">
    <location>
        <begin position="691"/>
        <end position="712"/>
    </location>
</feature>
<feature type="disulfide bond" description="Interchain (between gamma and beta chains)">
    <location>
        <begin position="857"/>
        <end position="1492"/>
    </location>
</feature>
<feature type="disulfide bond">
    <location>
        <begin position="1340"/>
        <end position="1468"/>
    </location>
</feature>
<feature type="disulfide bond">
    <location>
        <begin position="1368"/>
        <end position="1437"/>
    </location>
</feature>
<feature type="disulfide bond">
    <location>
        <begin position="1485"/>
        <end position="1490"/>
    </location>
</feature>
<feature type="disulfide bond">
    <location>
        <begin position="1497"/>
        <end position="1569"/>
    </location>
</feature>
<feature type="disulfide bond">
    <location>
        <begin position="1516"/>
        <end position="1640"/>
    </location>
</feature>
<feature type="disulfide bond">
    <location>
        <begin position="1616"/>
        <end position="1625"/>
    </location>
</feature>
<feature type="cross-link" description="Isoglutamyl cysteine thioester (Cys-Gln)" evidence="1">
    <location>
        <begin position="993"/>
        <end position="996"/>
    </location>
</feature>
<feature type="strand" evidence="12">
    <location>
        <begin position="24"/>
        <end position="35"/>
    </location>
</feature>
<feature type="strand" evidence="12">
    <location>
        <begin position="42"/>
        <end position="47"/>
    </location>
</feature>
<feature type="strand" evidence="12">
    <location>
        <begin position="52"/>
        <end position="61"/>
    </location>
</feature>
<feature type="strand" evidence="12">
    <location>
        <begin position="66"/>
        <end position="75"/>
    </location>
</feature>
<feature type="helix" evidence="12">
    <location>
        <begin position="77"/>
        <end position="79"/>
    </location>
</feature>
<feature type="strand" evidence="13">
    <location>
        <begin position="81"/>
        <end position="83"/>
    </location>
</feature>
<feature type="helix" evidence="12">
    <location>
        <begin position="91"/>
        <end position="93"/>
    </location>
</feature>
<feature type="strand" evidence="12">
    <location>
        <begin position="103"/>
        <end position="110"/>
    </location>
</feature>
<feature type="strand" evidence="12">
    <location>
        <begin position="113"/>
        <end position="122"/>
    </location>
</feature>
<feature type="strand" evidence="12">
    <location>
        <begin position="128"/>
        <end position="133"/>
    </location>
</feature>
<feature type="strand" evidence="12">
    <location>
        <begin position="135"/>
        <end position="137"/>
    </location>
</feature>
<feature type="strand" evidence="12">
    <location>
        <begin position="145"/>
        <end position="150"/>
    </location>
</feature>
<feature type="strand" evidence="12">
    <location>
        <begin position="161"/>
        <end position="166"/>
    </location>
</feature>
<feature type="strand" evidence="12">
    <location>
        <begin position="172"/>
        <end position="179"/>
    </location>
</feature>
<feature type="strand" evidence="12">
    <location>
        <begin position="195"/>
        <end position="203"/>
    </location>
</feature>
<feature type="strand" evidence="12">
    <location>
        <begin position="210"/>
        <end position="216"/>
    </location>
</feature>
<feature type="strand" evidence="12">
    <location>
        <begin position="223"/>
        <end position="236"/>
    </location>
</feature>
<feature type="strand" evidence="12">
    <location>
        <begin position="243"/>
        <end position="251"/>
    </location>
</feature>
<feature type="strand" evidence="12">
    <location>
        <begin position="259"/>
        <end position="269"/>
    </location>
</feature>
<feature type="strand" evidence="12">
    <location>
        <begin position="272"/>
        <end position="275"/>
    </location>
</feature>
<feature type="helix" evidence="12">
    <location>
        <begin position="277"/>
        <end position="279"/>
    </location>
</feature>
<feature type="strand" evidence="12">
    <location>
        <begin position="281"/>
        <end position="286"/>
    </location>
</feature>
<feature type="strand" evidence="12">
    <location>
        <begin position="289"/>
        <end position="294"/>
    </location>
</feature>
<feature type="helix" evidence="12">
    <location>
        <begin position="296"/>
        <end position="302"/>
    </location>
</feature>
<feature type="helix" evidence="12">
    <location>
        <begin position="306"/>
        <end position="309"/>
    </location>
</feature>
<feature type="strand" evidence="12">
    <location>
        <begin position="313"/>
        <end position="322"/>
    </location>
</feature>
<feature type="strand" evidence="12">
    <location>
        <begin position="328"/>
        <end position="342"/>
    </location>
</feature>
<feature type="strand" evidence="12">
    <location>
        <begin position="344"/>
        <end position="346"/>
    </location>
</feature>
<feature type="strand" evidence="14">
    <location>
        <begin position="348"/>
        <end position="350"/>
    </location>
</feature>
<feature type="strand" evidence="12">
    <location>
        <begin position="352"/>
        <end position="354"/>
    </location>
</feature>
<feature type="strand" evidence="14">
    <location>
        <begin position="356"/>
        <end position="358"/>
    </location>
</feature>
<feature type="strand" evidence="12">
    <location>
        <begin position="360"/>
        <end position="367"/>
    </location>
</feature>
<feature type="strand" evidence="14">
    <location>
        <begin position="369"/>
        <end position="371"/>
    </location>
</feature>
<feature type="strand" evidence="12">
    <location>
        <begin position="378"/>
        <end position="381"/>
    </location>
</feature>
<feature type="helix" evidence="12">
    <location>
        <begin position="382"/>
        <end position="384"/>
    </location>
</feature>
<feature type="strand" evidence="12">
    <location>
        <begin position="386"/>
        <end position="389"/>
    </location>
</feature>
<feature type="strand" evidence="12">
    <location>
        <begin position="394"/>
        <end position="400"/>
    </location>
</feature>
<feature type="strand" evidence="12">
    <location>
        <begin position="407"/>
        <end position="415"/>
    </location>
</feature>
<feature type="strand" evidence="13">
    <location>
        <begin position="418"/>
        <end position="420"/>
    </location>
</feature>
<feature type="helix" evidence="12">
    <location>
        <begin position="422"/>
        <end position="424"/>
    </location>
</feature>
<feature type="strand" evidence="12">
    <location>
        <begin position="427"/>
        <end position="434"/>
    </location>
</feature>
<feature type="helix" evidence="12">
    <location>
        <begin position="438"/>
        <end position="440"/>
    </location>
</feature>
<feature type="strand" evidence="12">
    <location>
        <begin position="444"/>
        <end position="449"/>
    </location>
</feature>
<feature type="strand" evidence="12">
    <location>
        <begin position="459"/>
        <end position="468"/>
    </location>
</feature>
<feature type="helix" evidence="12">
    <location>
        <begin position="470"/>
        <end position="474"/>
    </location>
</feature>
<feature type="strand" evidence="12">
    <location>
        <begin position="478"/>
        <end position="485"/>
    </location>
</feature>
<feature type="strand" evidence="12">
    <location>
        <begin position="488"/>
        <end position="496"/>
    </location>
</feature>
<feature type="strand" evidence="12">
    <location>
        <begin position="502"/>
        <end position="509"/>
    </location>
</feature>
<feature type="helix" evidence="12">
    <location>
        <begin position="512"/>
        <end position="514"/>
    </location>
</feature>
<feature type="strand" evidence="12">
    <location>
        <begin position="516"/>
        <end position="526"/>
    </location>
</feature>
<feature type="turn" evidence="12">
    <location>
        <begin position="527"/>
        <end position="529"/>
    </location>
</feature>
<feature type="strand" evidence="12">
    <location>
        <begin position="530"/>
        <end position="539"/>
    </location>
</feature>
<feature type="strand" evidence="12">
    <location>
        <begin position="548"/>
        <end position="551"/>
    </location>
</feature>
<feature type="strand" evidence="14">
    <location>
        <begin position="555"/>
        <end position="557"/>
    </location>
</feature>
<feature type="strand" evidence="12">
    <location>
        <begin position="562"/>
        <end position="570"/>
    </location>
</feature>
<feature type="strand" evidence="12">
    <location>
        <begin position="574"/>
        <end position="581"/>
    </location>
</feature>
<feature type="helix" evidence="12">
    <location>
        <begin position="582"/>
        <end position="587"/>
    </location>
</feature>
<feature type="helix" evidence="13">
    <location>
        <begin position="589"/>
        <end position="591"/>
    </location>
</feature>
<feature type="helix" evidence="12">
    <location>
        <begin position="595"/>
        <end position="604"/>
    </location>
</feature>
<feature type="strand" evidence="12">
    <location>
        <begin position="610"/>
        <end position="612"/>
    </location>
</feature>
<feature type="helix" evidence="12">
    <location>
        <begin position="617"/>
        <end position="623"/>
    </location>
</feature>
<feature type="strand" evidence="12">
    <location>
        <begin position="626"/>
        <end position="630"/>
    </location>
</feature>
<feature type="strand" evidence="14">
    <location>
        <begin position="641"/>
        <end position="643"/>
    </location>
</feature>
<feature type="helix" evidence="12">
    <location>
        <begin position="742"/>
        <end position="744"/>
    </location>
</feature>
<feature type="strand" evidence="12">
    <location>
        <begin position="753"/>
        <end position="755"/>
    </location>
</feature>
<feature type="strand" evidence="12">
    <location>
        <begin position="759"/>
        <end position="761"/>
    </location>
</feature>
<feature type="strand" evidence="12">
    <location>
        <begin position="772"/>
        <end position="779"/>
    </location>
</feature>
<feature type="strand" evidence="12">
    <location>
        <begin position="784"/>
        <end position="795"/>
    </location>
</feature>
<feature type="turn" evidence="12">
    <location>
        <begin position="796"/>
        <end position="798"/>
    </location>
</feature>
<feature type="strand" evidence="12">
    <location>
        <begin position="799"/>
        <end position="802"/>
    </location>
</feature>
<feature type="strand" evidence="12">
    <location>
        <begin position="806"/>
        <end position="810"/>
    </location>
</feature>
<feature type="strand" evidence="12">
    <location>
        <begin position="813"/>
        <end position="818"/>
    </location>
</feature>
<feature type="strand" evidence="12">
    <location>
        <begin position="830"/>
        <end position="838"/>
    </location>
</feature>
<feature type="strand" evidence="12">
    <location>
        <begin position="840"/>
        <end position="842"/>
    </location>
</feature>
<feature type="strand" evidence="12">
    <location>
        <begin position="844"/>
        <end position="850"/>
    </location>
</feature>
<feature type="strand" evidence="12">
    <location>
        <begin position="856"/>
        <end position="859"/>
    </location>
</feature>
<feature type="strand" evidence="13">
    <location>
        <begin position="862"/>
        <end position="864"/>
    </location>
</feature>
<feature type="strand" evidence="12">
    <location>
        <begin position="866"/>
        <end position="872"/>
    </location>
</feature>
<feature type="strand" evidence="12">
    <location>
        <begin position="876"/>
        <end position="886"/>
    </location>
</feature>
<feature type="strand" evidence="12">
    <location>
        <begin position="888"/>
        <end position="900"/>
    </location>
</feature>
<feature type="strand" evidence="12">
    <location>
        <begin position="906"/>
        <end position="916"/>
    </location>
</feature>
<feature type="strand" evidence="12">
    <location>
        <begin position="918"/>
        <end position="930"/>
    </location>
</feature>
<feature type="helix" evidence="12">
    <location>
        <begin position="932"/>
        <end position="935"/>
    </location>
</feature>
<feature type="strand" evidence="12">
    <location>
        <begin position="937"/>
        <end position="945"/>
    </location>
</feature>
<feature type="strand" evidence="12">
    <location>
        <begin position="959"/>
        <end position="967"/>
    </location>
</feature>
<feature type="strand" evidence="12">
    <location>
        <begin position="1274"/>
        <end position="1280"/>
    </location>
</feature>
<feature type="strand" evidence="11">
    <location>
        <begin position="1282"/>
        <end position="1286"/>
    </location>
</feature>
<feature type="strand" evidence="12">
    <location>
        <begin position="1288"/>
        <end position="1293"/>
    </location>
</feature>
<feature type="helix" evidence="12">
    <location>
        <begin position="1294"/>
        <end position="1296"/>
    </location>
</feature>
<feature type="strand" evidence="12">
    <location>
        <begin position="1301"/>
        <end position="1307"/>
    </location>
</feature>
<feature type="strand" evidence="12">
    <location>
        <begin position="1311"/>
        <end position="1318"/>
    </location>
</feature>
<feature type="strand" evidence="12">
    <location>
        <begin position="1321"/>
        <end position="1331"/>
    </location>
</feature>
<feature type="strand" evidence="12">
    <location>
        <begin position="1342"/>
        <end position="1351"/>
    </location>
</feature>
<feature type="strand" evidence="12">
    <location>
        <begin position="1363"/>
        <end position="1371"/>
    </location>
</feature>
<feature type="strand" evidence="12">
    <location>
        <begin position="1373"/>
        <end position="1375"/>
    </location>
</feature>
<feature type="strand" evidence="12">
    <location>
        <begin position="1377"/>
        <end position="1385"/>
    </location>
</feature>
<feature type="strand" evidence="12">
    <location>
        <begin position="1390"/>
        <end position="1393"/>
    </location>
</feature>
<feature type="helix" evidence="12">
    <location>
        <begin position="1394"/>
        <end position="1401"/>
    </location>
</feature>
<feature type="strand" evidence="12">
    <location>
        <begin position="1406"/>
        <end position="1408"/>
    </location>
</feature>
<feature type="strand" evidence="12">
    <location>
        <begin position="1417"/>
        <end position="1419"/>
    </location>
</feature>
<feature type="strand" evidence="12">
    <location>
        <begin position="1421"/>
        <end position="1430"/>
    </location>
</feature>
<feature type="strand" evidence="12">
    <location>
        <begin position="1432"/>
        <end position="1434"/>
    </location>
</feature>
<feature type="strand" evidence="12">
    <location>
        <begin position="1436"/>
        <end position="1444"/>
    </location>
</feature>
<feature type="strand" evidence="12">
    <location>
        <begin position="1454"/>
        <end position="1460"/>
    </location>
</feature>
<feature type="strand" evidence="12">
    <location>
        <begin position="1469"/>
        <end position="1473"/>
    </location>
</feature>
<feature type="strand" evidence="11">
    <location>
        <begin position="1474"/>
        <end position="1476"/>
    </location>
</feature>
<feature type="strand" evidence="12">
    <location>
        <begin position="1483"/>
        <end position="1486"/>
    </location>
</feature>
<feature type="strand" evidence="12">
    <location>
        <begin position="1489"/>
        <end position="1492"/>
    </location>
</feature>
<feature type="helix" evidence="12">
    <location>
        <begin position="1508"/>
        <end position="1515"/>
    </location>
</feature>
<feature type="strand" evidence="12">
    <location>
        <begin position="1522"/>
        <end position="1534"/>
    </location>
</feature>
<feature type="strand" evidence="12">
    <location>
        <begin position="1537"/>
        <end position="1549"/>
    </location>
</feature>
<feature type="helix" evidence="12">
    <location>
        <begin position="1556"/>
        <end position="1558"/>
    </location>
</feature>
<feature type="strand" evidence="12">
    <location>
        <begin position="1561"/>
        <end position="1566"/>
    </location>
</feature>
<feature type="helix" evidence="12">
    <location>
        <begin position="1567"/>
        <end position="1569"/>
    </location>
</feature>
<feature type="helix" evidence="12">
    <location>
        <begin position="1570"/>
        <end position="1573"/>
    </location>
</feature>
<feature type="strand" evidence="12">
    <location>
        <begin position="1580"/>
        <end position="1585"/>
    </location>
</feature>
<feature type="helix" evidence="12">
    <location>
        <begin position="1587"/>
        <end position="1589"/>
    </location>
</feature>
<feature type="strand" evidence="12">
    <location>
        <begin position="1596"/>
        <end position="1600"/>
    </location>
</feature>
<feature type="strand" evidence="13">
    <location>
        <begin position="1602"/>
        <end position="1604"/>
    </location>
</feature>
<feature type="strand" evidence="12">
    <location>
        <begin position="1606"/>
        <end position="1610"/>
    </location>
</feature>
<feature type="helix" evidence="12">
    <location>
        <begin position="1614"/>
        <end position="1617"/>
    </location>
</feature>
<feature type="turn" evidence="12">
    <location>
        <begin position="1619"/>
        <end position="1621"/>
    </location>
</feature>
<feature type="helix" evidence="12">
    <location>
        <begin position="1622"/>
        <end position="1638"/>
    </location>
</feature>
<keyword id="KW-0002">3D-structure</keyword>
<keyword id="KW-0165">Cleavage on pair of basic residues</keyword>
<keyword id="KW-1216">Complement system impairing toxin</keyword>
<keyword id="KW-1015">Disulfide bond</keyword>
<keyword id="KW-0325">Glycoprotein</keyword>
<keyword id="KW-0395">Inflammatory response</keyword>
<keyword id="KW-0460">Magnesium</keyword>
<keyword id="KW-0479">Metal-binding</keyword>
<keyword id="KW-0964">Secreted</keyword>
<keyword id="KW-0732">Signal</keyword>
<keyword id="KW-0882">Thioester bond</keyword>
<keyword id="KW-0800">Toxin</keyword>
<sequence>MERMALYLVAALLIGFPGSSHGALYTLITPAVLRTDTEEQILVEAHGDSTPKQLDIFVHDFPRKQKTLFQTRVDMNPAGGMLVTPTIEIPAKEVSTDSRQNQYVVVQVTGPQVRLEKVVLLSYQSSFLFIQTDKGIYTPGSPVLYRVFSMDHNTSKMNKTVIVEFQTPEGILVSSNSVDLNFFWPYNLPDLVSLGTWRIVAKYEHSPENYTAYFDVRKYVLPSFEVRLQPSEKFFYIDGNENFHVSITARYLYGEEVEGVAFVLFGVKIDDAKKSIPDSLTRIPIIDGDGKATLKRDTFRSRFPNLNELVGHTLYASVTVMTESGSDMVVTEQSGIHIVASPYQIHFTKTPKYFKPGMPYELTVYVTNPDGSPAAHVPVVSEAFHSMGTTLSDGTAKLILNIPLNAQSLPITVRTNHGDLPRERQATKSMTAIAYQTQGGSGNYLHVAITSTEIKPGDNLPVNFNVKGNANSLKQIKYFTYLILNKGKIFKVGRQPRRDGQNLVTMNLHITPDLIPSFRFVAYYQVGNNEIVADSVWVDVKDTCMGTLVVKGDNLIQMPGAAMKIKLEGDPGARVGLVAVDKAVYVLNDKYKISQAKIWDTIEKSDFGCTAGSGQNNLGVFEDAGLALTTSTNLNTKQRSAAKCPQPANRRRRSSVLLLDSNASKAAEFQDQDLRKCCEDVMHENPMGYTCEKRAKYIQEGDACKAAFLECCRYIKGVRDENQRESELFLARDDNEDGFIADSDIISRSDFPKSWLWLTKDLTEEPNSQGISSKTMSFYLRDSITTWVVLAVSFTPTKGICVAEPYEIRVMKVFFIDLQMPYSVVKNEQVEIRAILHNYVNEDIYVRVELLYNPAFCSASTKGQRYRQQFPIKALSSRAVPFVIVPLEQGLHDVEIKASVQEALWSDGVRKKLKVVPEGVQKSIVTIVKLDPRAKGVGGTQLEVIKARKLDDRVPDTEIETKIIIQGDPVAQIIENSIDGSKLNHLIITPSGCGEQNMIRMAAPVIATYYLDTTEQWETLGINRRTEAVNQIVTGYAQQMVYKKADHSYAAFTNRASSSWLTAYVVKVFAMAAKMVAGISHEIICGGVRWLILNRQQPDGAFKENAPVLSGTMQGGIQGAEEEVYLTAFILVALLESKTICNDYVNSLDSSIKKATNYLLKKYEKLQRPYTTALTAYALAAADQLNDDRVLMAASTGRDHWEEYNAHTHNIEGTSYALLALLKMKKFDQTGPIVRWLTDQNFYGETYGQTQATVMAFQALAEYEIQMPTHKDLNLDITIELPDREVPIRYRINYENALLARTVETKLNQDITVTASGDGKATMTILTFYNAQLQEKANVCNKFHLNVSVENIHLNAMGAKGALMLKICTRYLGEVDSTMTIIDISMLTGFLPDAEDLTRLSKGVDRYISRYEVDNNMAQKVAVIIYLNKVSHSEDECLHFKILKHFEVGFIQPGSVKVYSYYNLDEKCTKFYHPDKGTGLLNKICIGNVCRCAGETCSSLNHQERIDVPLQIEKACETNVDYVYKTKLLRIEEQDGNDIYVMDVLEVIKQGTDENPRAKTHQYISQRKCQEALNLKVNDDYLIWGSRSDLLPTKDKISYIITKNTWIERWPHEDECQEEEFQKLCDDFAQFSYTLTEFGCPT</sequence>
<comment type="function">
    <text>Complement-activating protein in cobra venom. It is a structural and functional analog of complement component C3b, the activated form of C3. It binds factor B (CFB), which is subsequently cleaved by factor D (CFD) to form the bimolecular complex CVF/Bb. CVF/Bb is a C3/C5 convertase that cleaves both complement components C3 and C5. Structurally, it resembles the C3b degradation product C3c, which is not able to form a C3/C5 convertase. Unlike C3b/Bb, CVF/Bb is a stable complex and completely resistant to the actions of complement regulatory factors H (CFH) and I (CFI). Therefore, CVF continuously activates complement resulting in the depletion of complement activity.</text>
</comment>
<comment type="subunit">
    <text evidence="6 7 8">Heterotrimer of alpha, beta and gamma chains; disulfide-linked. Is active with factor B in the presence of factor D.</text>
</comment>
<comment type="interaction">
    <interactant intactId="EBI-7081824">
        <id>Q91132</id>
    </interactant>
    <interactant intactId="EBI-8558308">
        <id>P01031</id>
        <label>C5</label>
    </interactant>
    <organismsDiffer>true</organismsDiffer>
    <experiments>2</experiments>
</comment>
<comment type="subcellular location">
    <subcellularLocation>
        <location>Secreted</location>
    </subcellularLocation>
</comment>
<comment type="tissue specificity">
    <text>Expressed by the venom gland.</text>
</comment>
<comment type="PTM">
    <text>First processed by the removal of 4 Arg residues by furin-type protease, forming two chains, alpha and gamma/beta precursor, linked by a disulfide bond. Probably, the cobrin cleaves the C3a-like domain and then the C3d-like domain, generating the mature cobra venom factor (CVF). This mature CVF is composed of three chains: alpha, gamma and beta.</text>
</comment>
<comment type="PTM">
    <text evidence="5 7 8">Contains 3 N-linked oligosaccharide chains, two in the alpha-chain and one in the beta-chain. Glycosylation is not required for the biological activity. However, it contributes to the immunogenicity of CVF. The carbohydrate content is 7.4. The major oligosaccharide is a symmetric fucosylated biantennary complex-type chain with an unusual alpha-galactosylated Le(x) structure at its non-reducing end.</text>
</comment>
<comment type="miscellaneous">
    <text evidence="10">CVF has been used to study the complement pathways and to investigate the role of complement in disease pathophysiology. It has also been used to consume complement to prevent the hyperactive rejection of organs in xenotransplantation and for targeted complement-mediated cell killing. CVF can be safely administered to laboratory animals for temporary depletion of complement activity. Interestingly, it is able to deplete complement in serum from all vertebrates tested, except cobras. The only side effect from massive activation of complement in vivo by CVF has been an acute and fleeting inflammatory injury of the lungs (PubMed:20417224).</text>
</comment>
<comment type="similarity">
    <text evidence="9">Belongs to the venom complement C3 homolog family.</text>
</comment>
<reference key="1">
    <citation type="journal article" date="1994" name="Proc. Natl. Acad. Sci. U.S.A.">
        <title>Molecular cloning and derived primary structure of cobra venom factor.</title>
        <authorList>
            <person name="Fritzinger D.C."/>
            <person name="Bredehorst R."/>
            <person name="Vogel C.-W."/>
        </authorList>
    </citation>
    <scope>NUCLEOTIDE SEQUENCE [MRNA]</scope>
    <source>
        <tissue>Venom gland</tissue>
    </source>
</reference>
<reference key="2">
    <citation type="journal article" date="1995" name="Proc. Natl. Acad. Sci. U.S.A.">
        <authorList>
            <person name="Fritzinger D.C."/>
            <person name="Bredehorst R."/>
            <person name="Vogel C.-W."/>
        </authorList>
    </citation>
    <scope>ERRATUM OF PUBMED:7809120</scope>
</reference>
<reference key="3">
    <citation type="submission" date="2003-12" db="EMBL/GenBank/DDBJ databases">
        <title>Genomic structure of cobra venom factor (CVF).</title>
        <authorList>
            <person name="Bammert H."/>
            <person name="Kunze B."/>
            <person name="Li Y."/>
            <person name="Fritzinger D.C."/>
            <person name="Bredehorst R."/>
            <person name="Vogel C.-W."/>
        </authorList>
    </citation>
    <scope>NUCLEOTIDE SEQUENCE [GENOMIC DNA] OF 1-24 AND 1608-1642</scope>
    <source>
        <tissue>Liver</tissue>
    </source>
</reference>
<reference key="4">
    <citation type="journal article" date="2010" name="Toxicon">
        <title>Cobra venom factor: Structure, function, and humanization for therapeutic complement depletion.</title>
        <authorList>
            <person name="Vogel C.-W."/>
            <person name="Fritzinger D.C."/>
        </authorList>
    </citation>
    <scope>REVIEW</scope>
</reference>
<reference key="5">
    <citation type="journal article" date="2001" name="Glycobiology">
        <title>N-linked oligosaccharides of cobra venom factor contain novel alpha(1-3)galactosylated Le(x) structures.</title>
        <authorList>
            <person name="Gowda D.C."/>
            <person name="Glushka J."/>
            <person name="van Halbeek H."/>
            <person name="Thotakura R.N."/>
            <person name="Bredehorst R."/>
            <person name="Vogel C.-W."/>
        </authorList>
    </citation>
    <scope>GLYCOSYLATION</scope>
</reference>
<reference key="6">
    <citation type="journal article" date="2004" name="J. Biol. Chem.">
        <title>Structure and function of recombinant cobra venom factor.</title>
        <authorList>
            <person name="Kock M.A."/>
            <person name="Hew B.E."/>
            <person name="Bammert H."/>
            <person name="Fritzinger D.C."/>
            <person name="Vogel C.-W."/>
        </authorList>
    </citation>
    <scope>STRUCTURE</scope>
</reference>
<reference key="7">
    <citation type="journal article" date="2009" name="EMBO J.">
        <title>Insights into complement convertase formation based on the structure of the factor B-cobra venom factor complex.</title>
        <authorList>
            <person name="Janssen B.J."/>
            <person name="Gomes L."/>
            <person name="Koning R.I."/>
            <person name="Svergun D.I."/>
            <person name="Koster A.J."/>
            <person name="Fritzinger D.C."/>
            <person name="Vogel C.-W."/>
            <person name="Gros P."/>
        </authorList>
    </citation>
    <scope>X-RAY CRYSTALLOGRAPHY (2.20 ANGSTROMS) OF 23-649; 733-984 AND 1264-1642 IN COMPLEX WITH HUMAN COMPLEMENT FACTOR B</scope>
    <scope>METAL-BINDING SITES</scope>
    <scope>GLYCOSYLATION AT ASN-209 AND ASN-1346</scope>
    <scope>DISULFIDE BONDS</scope>
</reference>
<reference key="8">
    <citation type="journal article" date="2009" name="Structure">
        <title>The crystal structure of cobra venom factor, a cofactor for C3- and C5-convertase CVFBb.</title>
        <authorList>
            <person name="Krishnan V."/>
            <person name="Ponnuraj K."/>
            <person name="Xu Y."/>
            <person name="Macon K."/>
            <person name="Volanakis J.E."/>
            <person name="Narayana S.V."/>
        </authorList>
    </citation>
    <scope>X-RAY CRYSTALLOGRAPHY (2.61 ANGSTROMS) OF 23-649; 733-984 AND 1264-1642</scope>
    <scope>METAL-BINDING SITES</scope>
    <scope>DISULFIDE BONDS</scope>
</reference>
<reference key="9">
    <citation type="journal article" date="2011" name="EMBO J.">
        <title>Substrate recognition by complement convertases revealed in the C5-cobra venom factor complex.</title>
        <authorList>
            <person name="Laursen N.S."/>
            <person name="Andersen K.R."/>
            <person name="Braren I."/>
            <person name="Spillner E."/>
            <person name="Sottrup-Jensen L."/>
            <person name="Andersen G.R."/>
        </authorList>
    </citation>
    <scope>X-RAY CRYSTALLOGRAPHY (4.30 ANGSTROMS) OF 23-1642 IN COMPLEX WITH HUMAN COMPLEMENT C5</scope>
    <scope>GLYCOSYLATION AT ASN-209 AND ASN-1346</scope>
    <scope>DISULFIDE BONDS</scope>
</reference>
<evidence type="ECO:0000250" key="1"/>
<evidence type="ECO:0000255" key="2"/>
<evidence type="ECO:0000255" key="3">
    <source>
        <dbReference type="PROSITE-ProRule" id="PRU00022"/>
    </source>
</evidence>
<evidence type="ECO:0000255" key="4">
    <source>
        <dbReference type="PROSITE-ProRule" id="PRU00295"/>
    </source>
</evidence>
<evidence type="ECO:0000269" key="5">
    <source>
    </source>
</evidence>
<evidence type="ECO:0000269" key="6">
    <source>
    </source>
</evidence>
<evidence type="ECO:0000269" key="7">
    <source>
    </source>
</evidence>
<evidence type="ECO:0000269" key="8">
    <source>
    </source>
</evidence>
<evidence type="ECO:0000305" key="9"/>
<evidence type="ECO:0000305" key="10">
    <source>
    </source>
</evidence>
<evidence type="ECO:0007829" key="11">
    <source>
        <dbReference type="PDB" id="3FRP"/>
    </source>
</evidence>
<evidence type="ECO:0007829" key="12">
    <source>
        <dbReference type="PDB" id="3HRZ"/>
    </source>
</evidence>
<evidence type="ECO:0007829" key="13">
    <source>
        <dbReference type="PDB" id="3HS0"/>
    </source>
</evidence>
<evidence type="ECO:0007829" key="14">
    <source>
        <dbReference type="PDB" id="8AYH"/>
    </source>
</evidence>
<protein>
    <recommendedName>
        <fullName>Cobra venom factor</fullName>
        <shortName>CVF</shortName>
        <shortName>CVFk</shortName>
    </recommendedName>
    <alternativeName>
        <fullName>Complement C3 homolog</fullName>
    </alternativeName>
    <component>
        <recommendedName>
            <fullName>Cobra venom factor alpha chain</fullName>
        </recommendedName>
    </component>
    <component>
        <recommendedName>
            <fullName>Cobra venom factor gamma chain</fullName>
        </recommendedName>
    </component>
    <component>
        <recommendedName>
            <fullName>Cobra venom factor beta chain</fullName>
        </recommendedName>
    </component>
</protein>